<accession>Q7KVA1</accession>
<accession>Q24116</accession>
<accession>Q9W034</accession>
<accession>Q9W035</accession>
<comment type="function">
    <text evidence="6">Catalyzes the first step in biosynthesis of glycosaminoglycan (PubMed:11929872). Transfers D-xylose from UDP-D-xylose to specific serine residues of the core protein (PubMed:11929872).</text>
</comment>
<comment type="catalytic activity">
    <reaction evidence="6">
        <text>UDP-alpha-D-xylose + L-seryl-[protein] = 3-O-(beta-D-xylosyl)-L-seryl-[protein] + UDP + H(+)</text>
        <dbReference type="Rhea" id="RHEA:50192"/>
        <dbReference type="Rhea" id="RHEA-COMP:9863"/>
        <dbReference type="Rhea" id="RHEA-COMP:12567"/>
        <dbReference type="ChEBI" id="CHEBI:15378"/>
        <dbReference type="ChEBI" id="CHEBI:29999"/>
        <dbReference type="ChEBI" id="CHEBI:57632"/>
        <dbReference type="ChEBI" id="CHEBI:58223"/>
        <dbReference type="ChEBI" id="CHEBI:132085"/>
        <dbReference type="EC" id="2.4.2.26"/>
    </reaction>
</comment>
<comment type="cofactor">
    <cofactor evidence="6">
        <name>Ca(2+)</name>
        <dbReference type="ChEBI" id="CHEBI:29108"/>
    </cofactor>
    <cofactor evidence="6">
        <name>Mn(2+)</name>
        <dbReference type="ChEBI" id="CHEBI:29035"/>
    </cofactor>
    <cofactor evidence="6">
        <name>Mg(2+)</name>
        <dbReference type="ChEBI" id="CHEBI:18420"/>
    </cofactor>
    <text evidence="6">Divalent metal cations. Calcium or manganese or magnesium.</text>
</comment>
<comment type="pathway">
    <text>Glycan metabolism; chondroitin sulfate biosynthesis.</text>
</comment>
<comment type="pathway">
    <text>Glycan metabolism; heparan sulfate biosynthesis.</text>
</comment>
<comment type="subcellular location">
    <subcellularLocation>
        <location evidence="1">Endoplasmic reticulum membrane</location>
        <topology evidence="1">Single-pass type II membrane protein</topology>
    </subcellularLocation>
    <subcellularLocation>
        <location evidence="1">Golgi apparatus membrane</location>
        <topology evidence="1">Single-pass type II membrane protein</topology>
    </subcellularLocation>
</comment>
<comment type="similarity">
    <text evidence="7">Belongs to the glycosyltransferase 14 family. XylT subfamily.</text>
</comment>
<comment type="sequence caution" evidence="7">
    <conflict type="frameshift">
        <sequence resource="EMBL-CDS" id="AAA75448"/>
    </conflict>
</comment>
<protein>
    <recommendedName>
        <fullName evidence="7">Xylosyltransferase oxt</fullName>
        <ecNumber evidence="6">2.4.2.26</ecNumber>
    </recommendedName>
    <alternativeName>
        <fullName>Imaginal disk type I</fullName>
    </alternativeName>
    <alternativeName>
        <fullName evidence="8">Peptide O-xylosyltransferase</fullName>
    </alternativeName>
</protein>
<proteinExistence type="evidence at transcript level"/>
<gene>
    <name evidence="8" type="primary">oxt</name>
    <name type="ORF">CG17771</name>
    <name evidence="8" type="ORF">CG32300</name>
</gene>
<name>XYLT_DROME</name>
<evidence type="ECO:0000250" key="1"/>
<evidence type="ECO:0000250" key="2">
    <source>
        <dbReference type="UniProtKB" id="Q86Y38"/>
    </source>
</evidence>
<evidence type="ECO:0000255" key="3"/>
<evidence type="ECO:0000255" key="4">
    <source>
        <dbReference type="PROSITE-ProRule" id="PRU00558"/>
    </source>
</evidence>
<evidence type="ECO:0000256" key="5">
    <source>
        <dbReference type="SAM" id="MobiDB-lite"/>
    </source>
</evidence>
<evidence type="ECO:0000269" key="6">
    <source>
    </source>
</evidence>
<evidence type="ECO:0000305" key="7"/>
<evidence type="ECO:0000312" key="8">
    <source>
        <dbReference type="FlyBase" id="FBgn0015360"/>
    </source>
</evidence>
<evidence type="ECO:0000312" key="9">
    <source>
        <dbReference type="Proteomes" id="UP000000803"/>
    </source>
</evidence>
<dbReference type="EC" id="2.4.2.26" evidence="6"/>
<dbReference type="EMBL" id="AJ430595">
    <property type="protein sequence ID" value="CAD23246.1"/>
    <property type="molecule type" value="mRNA"/>
</dbReference>
<dbReference type="EMBL" id="AE014296">
    <property type="protein sequence ID" value="AAF47625.1"/>
    <property type="molecule type" value="Genomic_DNA"/>
</dbReference>
<dbReference type="EMBL" id="AY069660">
    <property type="protein sequence ID" value="AAL39805.1"/>
    <property type="molecule type" value="mRNA"/>
</dbReference>
<dbReference type="EMBL" id="U32626">
    <property type="protein sequence ID" value="AAA75448.1"/>
    <property type="status" value="ALT_FRAME"/>
    <property type="molecule type" value="mRNA"/>
</dbReference>
<dbReference type="RefSeq" id="NP_647705.1">
    <property type="nucleotide sequence ID" value="NM_139448.4"/>
</dbReference>
<dbReference type="SMR" id="Q7KVA1"/>
<dbReference type="BioGRID" id="63804">
    <property type="interactions" value="28"/>
</dbReference>
<dbReference type="FunCoup" id="Q7KVA1">
    <property type="interactions" value="417"/>
</dbReference>
<dbReference type="IntAct" id="Q7KVA1">
    <property type="interactions" value="27"/>
</dbReference>
<dbReference type="STRING" id="7227.FBpp0072782"/>
<dbReference type="CAZy" id="GT14">
    <property type="family name" value="Glycosyltransferase Family 14"/>
</dbReference>
<dbReference type="GlyCosmos" id="Q7KVA1">
    <property type="glycosylation" value="5 sites, No reported glycans"/>
</dbReference>
<dbReference type="GlyGen" id="Q7KVA1">
    <property type="glycosylation" value="5 sites"/>
</dbReference>
<dbReference type="PaxDb" id="7227-FBpp0072782"/>
<dbReference type="DNASU" id="38288"/>
<dbReference type="EnsemblMetazoa" id="FBtr0072904">
    <property type="protein sequence ID" value="FBpp0072782"/>
    <property type="gene ID" value="FBgn0015360"/>
</dbReference>
<dbReference type="GeneID" id="38288"/>
<dbReference type="KEGG" id="dme:Dmel_CG32300"/>
<dbReference type="AGR" id="FB:FBgn0015360"/>
<dbReference type="CTD" id="5020"/>
<dbReference type="FlyBase" id="FBgn0015360">
    <property type="gene designation" value="oxt"/>
</dbReference>
<dbReference type="VEuPathDB" id="VectorBase:FBgn0015360"/>
<dbReference type="eggNOG" id="KOG0799">
    <property type="taxonomic scope" value="Eukaryota"/>
</dbReference>
<dbReference type="eggNOG" id="KOG4157">
    <property type="taxonomic scope" value="Eukaryota"/>
</dbReference>
<dbReference type="GeneTree" id="ENSGT00940000169133"/>
<dbReference type="HOGENOM" id="CLU_012840_1_0_1"/>
<dbReference type="InParanoid" id="Q7KVA1"/>
<dbReference type="OMA" id="RECFCGF"/>
<dbReference type="OrthoDB" id="2019572at2759"/>
<dbReference type="PhylomeDB" id="Q7KVA1"/>
<dbReference type="Reactome" id="R-DME-1971475">
    <property type="pathway name" value="A tetrasaccharide linker sequence is required for GAG synthesis"/>
</dbReference>
<dbReference type="UniPathway" id="UPA00755"/>
<dbReference type="UniPathway" id="UPA00756"/>
<dbReference type="BioGRID-ORCS" id="38288">
    <property type="hits" value="0 hits in 3 CRISPR screens"/>
</dbReference>
<dbReference type="ChiTaRS" id="oxt">
    <property type="organism name" value="fly"/>
</dbReference>
<dbReference type="GenomeRNAi" id="38288"/>
<dbReference type="PRO" id="PR:Q7KVA1"/>
<dbReference type="Proteomes" id="UP000000803">
    <property type="component" value="Chromosome 3L"/>
</dbReference>
<dbReference type="Bgee" id="FBgn0015360">
    <property type="expression patterns" value="Expressed in posterior terminal follicle cell in ovary and 80 other cell types or tissues"/>
</dbReference>
<dbReference type="GO" id="GO:0005789">
    <property type="term" value="C:endoplasmic reticulum membrane"/>
    <property type="evidence" value="ECO:0007669"/>
    <property type="project" value="UniProtKB-SubCell"/>
</dbReference>
<dbReference type="GO" id="GO:0000139">
    <property type="term" value="C:Golgi membrane"/>
    <property type="evidence" value="ECO:0000250"/>
    <property type="project" value="FlyBase"/>
</dbReference>
<dbReference type="GO" id="GO:0016020">
    <property type="term" value="C:membrane"/>
    <property type="evidence" value="ECO:0000303"/>
    <property type="project" value="UniProtKB"/>
</dbReference>
<dbReference type="GO" id="GO:0046872">
    <property type="term" value="F:metal ion binding"/>
    <property type="evidence" value="ECO:0007669"/>
    <property type="project" value="UniProtKB-KW"/>
</dbReference>
<dbReference type="GO" id="GO:0030158">
    <property type="term" value="F:protein xylosyltransferase activity"/>
    <property type="evidence" value="ECO:0000314"/>
    <property type="project" value="UniProtKB"/>
</dbReference>
<dbReference type="GO" id="GO:0050650">
    <property type="term" value="P:chondroitin sulfate proteoglycan biosynthetic process"/>
    <property type="evidence" value="ECO:0000314"/>
    <property type="project" value="UniProtKB"/>
</dbReference>
<dbReference type="GO" id="GO:0120532">
    <property type="term" value="P:glycosaminoglycan-protein linkage region biosynthetic process"/>
    <property type="evidence" value="ECO:0000314"/>
    <property type="project" value="FlyBase"/>
</dbReference>
<dbReference type="GO" id="GO:0015012">
    <property type="term" value="P:heparan sulfate proteoglycan biosynthetic process"/>
    <property type="evidence" value="ECO:0000314"/>
    <property type="project" value="UniProtKB"/>
</dbReference>
<dbReference type="InterPro" id="IPR003406">
    <property type="entry name" value="Glyco_trans_14"/>
</dbReference>
<dbReference type="InterPro" id="IPR002889">
    <property type="entry name" value="WSC_carb-bd"/>
</dbReference>
<dbReference type="InterPro" id="IPR043538">
    <property type="entry name" value="XYLT"/>
</dbReference>
<dbReference type="InterPro" id="IPR024448">
    <property type="entry name" value="XylT_C"/>
</dbReference>
<dbReference type="PANTHER" id="PTHR46025">
    <property type="entry name" value="XYLOSYLTRANSFERASE OXT"/>
    <property type="match status" value="1"/>
</dbReference>
<dbReference type="PANTHER" id="PTHR46025:SF3">
    <property type="entry name" value="XYLOSYLTRANSFERASE OXT"/>
    <property type="match status" value="1"/>
</dbReference>
<dbReference type="Pfam" id="PF02485">
    <property type="entry name" value="Branch"/>
    <property type="match status" value="1"/>
</dbReference>
<dbReference type="Pfam" id="PF01822">
    <property type="entry name" value="WSC"/>
    <property type="match status" value="1"/>
</dbReference>
<dbReference type="Pfam" id="PF12529">
    <property type="entry name" value="Xylo_C"/>
    <property type="match status" value="1"/>
</dbReference>
<dbReference type="SMART" id="SM00321">
    <property type="entry name" value="WSC"/>
    <property type="match status" value="1"/>
</dbReference>
<dbReference type="PROSITE" id="PS51212">
    <property type="entry name" value="WSC"/>
    <property type="match status" value="1"/>
</dbReference>
<sequence length="876" mass="99098">MEQSVSARWLKRYRAFFLILLLIVAIQLFLAYKSLDIVGGGSGSGFDAAEAPASPPPPHAQARVQPPARTKLTAQQLGFQPECDILAREAISALQRAKTKDCREHIAQIACAIQAGRFYAPQLRSSCPAGNHTANVSLGCFKDEKDRRLLAGYYSSSKTSNSPAKCVELCLQSGYPYAGVQYGRECFCGYDPPPKASKLPDSSCNTKCLGNAKEICGGFYAMNIYETGIAKFTAQLAATTPSEETKRVRIAFLLTLNGRALRQVHRLLKALYAPEHVYYIHVDERQDYLYRKLLELESKFPNIRLARKRFSTIWGGASLLTMLLQCMEDLLQSNWHWDFVINLSESDFPVKTLDKLVDFLSANPGRNFVKGHGRETQKFIQKQGLDKTFVECDTHMWRIGDRKLPAGIQVDGGSDWVALSRPFVGYVTHPREDDELLQALLKLFRHTLLPAESFFHTVLRNTKHCTSYVDNNLHVTNWKRKQGCKCQYKHVVDWCGCSPNDFKPEDWPRLQATEQKSLFFARKFEPVINQAVLLQLEEWLYGPYTSEYANLHGYWQSLYHHEDVHGSGDDLARSIGDSVMRLSARQAKLYPLELIELTHYLHRDQYKGFLVRYRARGSTGKPLHLETRVRPTQQGKLARNARFSKRLRNFEVSTDFDQKEQIARNFGKLLGPQSDLLLSYTLQANADSGAASHSYNLTLLWIDPLGRLQDFNELHVEDSTSDVINHSKTLLKHPITPGIWTAKLIGRNSIYAQLKFLIAPLAYYKGYPLAKSSDAEALNAGLTVALPEDFEMPVEWQQHLQTDDEQFTMREESLAKGKMLGQELHSWIDGLVGQFFQLRESCVVEADSEVSLPLCSDAPWSSLAPDPKSDVDALLK</sequence>
<feature type="chain" id="PRO_0000191414" description="Xylosyltransferase oxt">
    <location>
        <begin position="1"/>
        <end position="876"/>
    </location>
</feature>
<feature type="topological domain" description="Cytoplasmic" evidence="3">
    <location>
        <begin position="1"/>
        <end position="14"/>
    </location>
</feature>
<feature type="transmembrane region" description="Helical; Signal-anchor for type II membrane protein" evidence="3">
    <location>
        <begin position="15"/>
        <end position="35"/>
    </location>
</feature>
<feature type="topological domain" description="Lumenal" evidence="3">
    <location>
        <begin position="36"/>
        <end position="876"/>
    </location>
</feature>
<feature type="domain" description="WSC" evidence="4">
    <location>
        <begin position="134"/>
        <end position="228"/>
    </location>
</feature>
<feature type="region of interest" description="Disordered" evidence="5">
    <location>
        <begin position="48"/>
        <end position="67"/>
    </location>
</feature>
<feature type="binding site" evidence="2">
    <location>
        <position position="283"/>
    </location>
    <ligand>
        <name>UDP-alpha-D-xylose</name>
        <dbReference type="ChEBI" id="CHEBI:57632"/>
    </ligand>
</feature>
<feature type="binding site" evidence="2">
    <location>
        <begin position="312"/>
        <end position="314"/>
    </location>
    <ligand>
        <name>UDP-alpha-D-xylose</name>
        <dbReference type="ChEBI" id="CHEBI:57632"/>
    </ligand>
</feature>
<feature type="binding site" evidence="2">
    <location>
        <begin position="415"/>
        <end position="416"/>
    </location>
    <ligand>
        <name>UDP-alpha-D-xylose</name>
        <dbReference type="ChEBI" id="CHEBI:57632"/>
    </ligand>
</feature>
<feature type="binding site" evidence="2">
    <location>
        <position position="498"/>
    </location>
    <ligand>
        <name>UDP-alpha-D-xylose</name>
        <dbReference type="ChEBI" id="CHEBI:57632"/>
    </ligand>
</feature>
<feature type="binding site" evidence="2">
    <location>
        <begin position="522"/>
        <end position="523"/>
    </location>
    <ligand>
        <name>UDP-alpha-D-xylose</name>
        <dbReference type="ChEBI" id="CHEBI:57632"/>
    </ligand>
</feature>
<feature type="glycosylation site" description="N-linked (GlcNAc...) asparagine" evidence="3">
    <location>
        <position position="131"/>
    </location>
</feature>
<feature type="glycosylation site" description="N-linked (GlcNAc...) asparagine" evidence="3">
    <location>
        <position position="135"/>
    </location>
</feature>
<feature type="glycosylation site" description="N-linked (GlcNAc...) asparagine" evidence="3">
    <location>
        <position position="342"/>
    </location>
</feature>
<feature type="glycosylation site" description="N-linked (GlcNAc...) asparagine" evidence="3">
    <location>
        <position position="696"/>
    </location>
</feature>
<feature type="glycosylation site" description="N-linked (GlcNAc...) asparagine" evidence="3">
    <location>
        <position position="725"/>
    </location>
</feature>
<feature type="disulfide bond" evidence="2">
    <location>
        <begin position="83"/>
        <end position="111"/>
    </location>
</feature>
<feature type="disulfide bond" evidence="2">
    <location>
        <begin position="127"/>
        <end position="465"/>
    </location>
</feature>
<feature type="disulfide bond" evidence="2">
    <location>
        <begin position="484"/>
        <end position="497"/>
    </location>
</feature>
<feature type="disulfide bond" evidence="2">
    <location>
        <begin position="486"/>
        <end position="495"/>
    </location>
</feature>
<feature type="disulfide bond" evidence="2">
    <location>
        <begin position="842"/>
        <end position="855"/>
    </location>
</feature>
<feature type="sequence conflict" description="In Ref. 5." evidence="7" ref="5">
    <original>Y</original>
    <variation>D</variation>
    <location>
        <position position="590"/>
    </location>
</feature>
<keyword id="KW-1015">Disulfide bond</keyword>
<keyword id="KW-0256">Endoplasmic reticulum</keyword>
<keyword id="KW-0325">Glycoprotein</keyword>
<keyword id="KW-0328">Glycosyltransferase</keyword>
<keyword id="KW-0333">Golgi apparatus</keyword>
<keyword id="KW-0460">Magnesium</keyword>
<keyword id="KW-0464">Manganese</keyword>
<keyword id="KW-0472">Membrane</keyword>
<keyword id="KW-0479">Metal-binding</keyword>
<keyword id="KW-1185">Reference proteome</keyword>
<keyword id="KW-0735">Signal-anchor</keyword>
<keyword id="KW-0808">Transferase</keyword>
<keyword id="KW-0812">Transmembrane</keyword>
<keyword id="KW-1133">Transmembrane helix</keyword>
<reference key="1">
    <citation type="journal article" date="2002" name="J. Biol. Chem.">
        <title>Functional expression of Drosophila melanogaster peptide O-xylosyltransferase, the key enzyme for proteoglycan chain initiation and member of the core 2/I N-acetylglucosaminyltransferase family.</title>
        <authorList>
            <person name="Wilson I.B.H."/>
        </authorList>
    </citation>
    <scope>NUCLEOTIDE SEQUENCE [MRNA]</scope>
    <scope>FUNCTION</scope>
    <scope>ENZYME ACTIVITY</scope>
    <scope>COFACTOR</scope>
</reference>
<reference key="2">
    <citation type="journal article" date="2000" name="Science">
        <title>The genome sequence of Drosophila melanogaster.</title>
        <authorList>
            <person name="Adams M.D."/>
            <person name="Celniker S.E."/>
            <person name="Holt R.A."/>
            <person name="Evans C.A."/>
            <person name="Gocayne J.D."/>
            <person name="Amanatides P.G."/>
            <person name="Scherer S.E."/>
            <person name="Li P.W."/>
            <person name="Hoskins R.A."/>
            <person name="Galle R.F."/>
            <person name="George R.A."/>
            <person name="Lewis S.E."/>
            <person name="Richards S."/>
            <person name="Ashburner M."/>
            <person name="Henderson S.N."/>
            <person name="Sutton G.G."/>
            <person name="Wortman J.R."/>
            <person name="Yandell M.D."/>
            <person name="Zhang Q."/>
            <person name="Chen L.X."/>
            <person name="Brandon R.C."/>
            <person name="Rogers Y.-H.C."/>
            <person name="Blazej R.G."/>
            <person name="Champe M."/>
            <person name="Pfeiffer B.D."/>
            <person name="Wan K.H."/>
            <person name="Doyle C."/>
            <person name="Baxter E.G."/>
            <person name="Helt G."/>
            <person name="Nelson C.R."/>
            <person name="Miklos G.L.G."/>
            <person name="Abril J.F."/>
            <person name="Agbayani A."/>
            <person name="An H.-J."/>
            <person name="Andrews-Pfannkoch C."/>
            <person name="Baldwin D."/>
            <person name="Ballew R.M."/>
            <person name="Basu A."/>
            <person name="Baxendale J."/>
            <person name="Bayraktaroglu L."/>
            <person name="Beasley E.M."/>
            <person name="Beeson K.Y."/>
            <person name="Benos P.V."/>
            <person name="Berman B.P."/>
            <person name="Bhandari D."/>
            <person name="Bolshakov S."/>
            <person name="Borkova D."/>
            <person name="Botchan M.R."/>
            <person name="Bouck J."/>
            <person name="Brokstein P."/>
            <person name="Brottier P."/>
            <person name="Burtis K.C."/>
            <person name="Busam D.A."/>
            <person name="Butler H."/>
            <person name="Cadieu E."/>
            <person name="Center A."/>
            <person name="Chandra I."/>
            <person name="Cherry J.M."/>
            <person name="Cawley S."/>
            <person name="Dahlke C."/>
            <person name="Davenport L.B."/>
            <person name="Davies P."/>
            <person name="de Pablos B."/>
            <person name="Delcher A."/>
            <person name="Deng Z."/>
            <person name="Mays A.D."/>
            <person name="Dew I."/>
            <person name="Dietz S.M."/>
            <person name="Dodson K."/>
            <person name="Doup L.E."/>
            <person name="Downes M."/>
            <person name="Dugan-Rocha S."/>
            <person name="Dunkov B.C."/>
            <person name="Dunn P."/>
            <person name="Durbin K.J."/>
            <person name="Evangelista C.C."/>
            <person name="Ferraz C."/>
            <person name="Ferriera S."/>
            <person name="Fleischmann W."/>
            <person name="Fosler C."/>
            <person name="Gabrielian A.E."/>
            <person name="Garg N.S."/>
            <person name="Gelbart W.M."/>
            <person name="Glasser K."/>
            <person name="Glodek A."/>
            <person name="Gong F."/>
            <person name="Gorrell J.H."/>
            <person name="Gu Z."/>
            <person name="Guan P."/>
            <person name="Harris M."/>
            <person name="Harris N.L."/>
            <person name="Harvey D.A."/>
            <person name="Heiman T.J."/>
            <person name="Hernandez J.R."/>
            <person name="Houck J."/>
            <person name="Hostin D."/>
            <person name="Houston K.A."/>
            <person name="Howland T.J."/>
            <person name="Wei M.-H."/>
            <person name="Ibegwam C."/>
            <person name="Jalali M."/>
            <person name="Kalush F."/>
            <person name="Karpen G.H."/>
            <person name="Ke Z."/>
            <person name="Kennison J.A."/>
            <person name="Ketchum K.A."/>
            <person name="Kimmel B.E."/>
            <person name="Kodira C.D."/>
            <person name="Kraft C.L."/>
            <person name="Kravitz S."/>
            <person name="Kulp D."/>
            <person name="Lai Z."/>
            <person name="Lasko P."/>
            <person name="Lei Y."/>
            <person name="Levitsky A.A."/>
            <person name="Li J.H."/>
            <person name="Li Z."/>
            <person name="Liang Y."/>
            <person name="Lin X."/>
            <person name="Liu X."/>
            <person name="Mattei B."/>
            <person name="McIntosh T.C."/>
            <person name="McLeod M.P."/>
            <person name="McPherson D."/>
            <person name="Merkulov G."/>
            <person name="Milshina N.V."/>
            <person name="Mobarry C."/>
            <person name="Morris J."/>
            <person name="Moshrefi A."/>
            <person name="Mount S.M."/>
            <person name="Moy M."/>
            <person name="Murphy B."/>
            <person name="Murphy L."/>
            <person name="Muzny D.M."/>
            <person name="Nelson D.L."/>
            <person name="Nelson D.R."/>
            <person name="Nelson K.A."/>
            <person name="Nixon K."/>
            <person name="Nusskern D.R."/>
            <person name="Pacleb J.M."/>
            <person name="Palazzolo M."/>
            <person name="Pittman G.S."/>
            <person name="Pan S."/>
            <person name="Pollard J."/>
            <person name="Puri V."/>
            <person name="Reese M.G."/>
            <person name="Reinert K."/>
            <person name="Remington K."/>
            <person name="Saunders R.D.C."/>
            <person name="Scheeler F."/>
            <person name="Shen H."/>
            <person name="Shue B.C."/>
            <person name="Siden-Kiamos I."/>
            <person name="Simpson M."/>
            <person name="Skupski M.P."/>
            <person name="Smith T.J."/>
            <person name="Spier E."/>
            <person name="Spradling A.C."/>
            <person name="Stapleton M."/>
            <person name="Strong R."/>
            <person name="Sun E."/>
            <person name="Svirskas R."/>
            <person name="Tector C."/>
            <person name="Turner R."/>
            <person name="Venter E."/>
            <person name="Wang A.H."/>
            <person name="Wang X."/>
            <person name="Wang Z.-Y."/>
            <person name="Wassarman D.A."/>
            <person name="Weinstock G.M."/>
            <person name="Weissenbach J."/>
            <person name="Williams S.M."/>
            <person name="Woodage T."/>
            <person name="Worley K.C."/>
            <person name="Wu D."/>
            <person name="Yang S."/>
            <person name="Yao Q.A."/>
            <person name="Ye J."/>
            <person name="Yeh R.-F."/>
            <person name="Zaveri J.S."/>
            <person name="Zhan M."/>
            <person name="Zhang G."/>
            <person name="Zhao Q."/>
            <person name="Zheng L."/>
            <person name="Zheng X.H."/>
            <person name="Zhong F.N."/>
            <person name="Zhong W."/>
            <person name="Zhou X."/>
            <person name="Zhu S.C."/>
            <person name="Zhu X."/>
            <person name="Smith H.O."/>
            <person name="Gibbs R.A."/>
            <person name="Myers E.W."/>
            <person name="Rubin G.M."/>
            <person name="Venter J.C."/>
        </authorList>
    </citation>
    <scope>NUCLEOTIDE SEQUENCE [LARGE SCALE GENOMIC DNA]</scope>
    <source>
        <strain>Berkeley</strain>
    </source>
</reference>
<reference key="3">
    <citation type="journal article" date="2002" name="Genome Biol.">
        <title>Annotation of the Drosophila melanogaster euchromatic genome: a systematic review.</title>
        <authorList>
            <person name="Misra S."/>
            <person name="Crosby M.A."/>
            <person name="Mungall C.J."/>
            <person name="Matthews B.B."/>
            <person name="Campbell K.S."/>
            <person name="Hradecky P."/>
            <person name="Huang Y."/>
            <person name="Kaminker J.S."/>
            <person name="Millburn G.H."/>
            <person name="Prochnik S.E."/>
            <person name="Smith C.D."/>
            <person name="Tupy J.L."/>
            <person name="Whitfield E.J."/>
            <person name="Bayraktaroglu L."/>
            <person name="Berman B.P."/>
            <person name="Bettencourt B.R."/>
            <person name="Celniker S.E."/>
            <person name="de Grey A.D.N.J."/>
            <person name="Drysdale R.A."/>
            <person name="Harris N.L."/>
            <person name="Richter J."/>
            <person name="Russo S."/>
            <person name="Schroeder A.J."/>
            <person name="Shu S.Q."/>
            <person name="Stapleton M."/>
            <person name="Yamada C."/>
            <person name="Ashburner M."/>
            <person name="Gelbart W.M."/>
            <person name="Rubin G.M."/>
            <person name="Lewis S.E."/>
        </authorList>
    </citation>
    <scope>GENOME REANNOTATION</scope>
    <source>
        <strain>Berkeley</strain>
    </source>
</reference>
<reference key="4">
    <citation type="journal article" date="2002" name="Genome Biol.">
        <title>A Drosophila full-length cDNA resource.</title>
        <authorList>
            <person name="Stapleton M."/>
            <person name="Carlson J.W."/>
            <person name="Brokstein P."/>
            <person name="Yu C."/>
            <person name="Champe M."/>
            <person name="George R.A."/>
            <person name="Guarin H."/>
            <person name="Kronmiller B."/>
            <person name="Pacleb J.M."/>
            <person name="Park S."/>
            <person name="Wan K.H."/>
            <person name="Rubin G.M."/>
            <person name="Celniker S.E."/>
        </authorList>
    </citation>
    <scope>NUCLEOTIDE SEQUENCE [LARGE SCALE MRNA]</scope>
    <source>
        <strain>Berkeley</strain>
        <tissue>Embryo</tissue>
    </source>
</reference>
<reference key="5">
    <citation type="submission" date="1995-07" db="EMBL/GenBank/DDBJ databases">
        <authorList>
            <person name="Bessarab D.A."/>
            <person name="Sun H.Y."/>
        </authorList>
    </citation>
    <scope>NUCLEOTIDE SEQUENCE [MRNA] OF 322-876</scope>
    <source>
        <tissue>Imaginal disk</tissue>
    </source>
</reference>
<organism evidence="9">
    <name type="scientific">Drosophila melanogaster</name>
    <name type="common">Fruit fly</name>
    <dbReference type="NCBI Taxonomy" id="7227"/>
    <lineage>
        <taxon>Eukaryota</taxon>
        <taxon>Metazoa</taxon>
        <taxon>Ecdysozoa</taxon>
        <taxon>Arthropoda</taxon>
        <taxon>Hexapoda</taxon>
        <taxon>Insecta</taxon>
        <taxon>Pterygota</taxon>
        <taxon>Neoptera</taxon>
        <taxon>Endopterygota</taxon>
        <taxon>Diptera</taxon>
        <taxon>Brachycera</taxon>
        <taxon>Muscomorpha</taxon>
        <taxon>Ephydroidea</taxon>
        <taxon>Drosophilidae</taxon>
        <taxon>Drosophila</taxon>
        <taxon>Sophophora</taxon>
    </lineage>
</organism>